<name>S22AA_HUMAN</name>
<evidence type="ECO:0000255" key="1"/>
<evidence type="ECO:0000269" key="2">
    <source>
    </source>
</evidence>
<evidence type="ECO:0000269" key="3">
    <source>
    </source>
</evidence>
<evidence type="ECO:0000303" key="4">
    <source>
    </source>
</evidence>
<evidence type="ECO:0000305" key="5"/>
<reference key="1">
    <citation type="journal article" date="2004" name="Oncogene">
        <title>Expression profiling and differential screening between hepatoblastomas and the corresponding normal livers: identification of high expression of the PLK1 oncogene as a poor-prognostic indicator of hepatoblastomas.</title>
        <authorList>
            <person name="Yamada S."/>
            <person name="Ohira M."/>
            <person name="Horie H."/>
            <person name="Ando K."/>
            <person name="Takayasu H."/>
            <person name="Suzuki Y."/>
            <person name="Sugano S."/>
            <person name="Hirata T."/>
            <person name="Goto T."/>
            <person name="Matsunaga T."/>
            <person name="Hiyama E."/>
            <person name="Hayashi Y."/>
            <person name="Ando H."/>
            <person name="Suita S."/>
            <person name="Kaneko M."/>
            <person name="Sasaki F."/>
            <person name="Hashizume K."/>
            <person name="Ohnuma N."/>
            <person name="Nakagawara A."/>
        </authorList>
    </citation>
    <scope>NUCLEOTIDE SEQUENCE [MRNA] (ISOFORM 2)</scope>
</reference>
<reference key="2">
    <citation type="journal article" date="2006" name="Nature">
        <title>Human chromosome 11 DNA sequence and analysis including novel gene identification.</title>
        <authorList>
            <person name="Taylor T.D."/>
            <person name="Noguchi H."/>
            <person name="Totoki Y."/>
            <person name="Toyoda A."/>
            <person name="Kuroki Y."/>
            <person name="Dewar K."/>
            <person name="Lloyd C."/>
            <person name="Itoh T."/>
            <person name="Takeda T."/>
            <person name="Kim D.-W."/>
            <person name="She X."/>
            <person name="Barlow K.F."/>
            <person name="Bloom T."/>
            <person name="Bruford E."/>
            <person name="Chang J.L."/>
            <person name="Cuomo C.A."/>
            <person name="Eichler E."/>
            <person name="FitzGerald M.G."/>
            <person name="Jaffe D.B."/>
            <person name="LaButti K."/>
            <person name="Nicol R."/>
            <person name="Park H.-S."/>
            <person name="Seaman C."/>
            <person name="Sougnez C."/>
            <person name="Yang X."/>
            <person name="Zimmer A.R."/>
            <person name="Zody M.C."/>
            <person name="Birren B.W."/>
            <person name="Nusbaum C."/>
            <person name="Fujiyama A."/>
            <person name="Hattori M."/>
            <person name="Rogers J."/>
            <person name="Lander E.S."/>
            <person name="Sakaki Y."/>
        </authorList>
    </citation>
    <scope>NUCLEOTIDE SEQUENCE [LARGE SCALE GENOMIC DNA]</scope>
</reference>
<reference key="3">
    <citation type="journal article" date="2001" name="Biochem. Biophys. Res. Commun.">
        <title>Isolation of a family of organic anion transporters from human liver and kidney.</title>
        <authorList>
            <person name="Sun W."/>
            <person name="Wu R.R."/>
            <person name="van Poelje P.D."/>
            <person name="Erion M.D."/>
        </authorList>
    </citation>
    <scope>IDENTIFICATION</scope>
    <scope>TISSUE SPECIFICITY</scope>
</reference>
<reference key="4">
    <citation type="journal article" date="2002" name="Biochem. Biophys. Res. Commun.">
        <title>Novel human cDNAs homologous to Drosophila Orct and mammalian carnitine transporters.</title>
        <authorList>
            <person name="Eraly S.A."/>
            <person name="Nigam S.K."/>
        </authorList>
    </citation>
    <scope>IDENTIFICATION</scope>
    <scope>TISSUE SPECIFICITY</scope>
</reference>
<keyword id="KW-0025">Alternative splicing</keyword>
<keyword id="KW-0325">Glycoprotein</keyword>
<keyword id="KW-0472">Membrane</keyword>
<keyword id="KW-1267">Proteomics identification</keyword>
<keyword id="KW-1185">Reference proteome</keyword>
<keyword id="KW-0812">Transmembrane</keyword>
<keyword id="KW-1133">Transmembrane helix</keyword>
<keyword id="KW-0813">Transport</keyword>
<gene>
    <name type="primary">SLC22A10</name>
    <name type="synonym">OAT5</name>
</gene>
<dbReference type="EMBL" id="AB075876">
    <property type="protein sequence ID" value="BAD38658.1"/>
    <property type="molecule type" value="mRNA"/>
</dbReference>
<dbReference type="EMBL" id="AP001858">
    <property type="status" value="NOT_ANNOTATED_CDS"/>
    <property type="molecule type" value="Genomic_DNA"/>
</dbReference>
<dbReference type="EMBL" id="AP001880">
    <property type="status" value="NOT_ANNOTATED_CDS"/>
    <property type="molecule type" value="Genomic_DNA"/>
</dbReference>
<dbReference type="EMBL" id="AP003420">
    <property type="status" value="NOT_ANNOTATED_CDS"/>
    <property type="molecule type" value="Genomic_DNA"/>
</dbReference>
<dbReference type="EMBL" id="BK001421">
    <property type="protein sequence ID" value="DAA01503.1"/>
    <property type="molecule type" value="mRNA"/>
</dbReference>
<dbReference type="CCDS" id="CCDS41661.1">
    <molecule id="Q63ZE4-1"/>
</dbReference>
<dbReference type="RefSeq" id="NP_001034841.3">
    <molecule id="Q63ZE4-1"/>
    <property type="nucleotide sequence ID" value="NM_001039752.4"/>
</dbReference>
<dbReference type="RefSeq" id="XP_011543318.1">
    <property type="nucleotide sequence ID" value="XM_011545016.2"/>
</dbReference>
<dbReference type="SMR" id="Q63ZE4"/>
<dbReference type="BioGRID" id="132437">
    <property type="interactions" value="1"/>
</dbReference>
<dbReference type="FunCoup" id="Q63ZE4">
    <property type="interactions" value="30"/>
</dbReference>
<dbReference type="STRING" id="9606.ENSP00000327569"/>
<dbReference type="DrugBank" id="DB00286">
    <property type="generic name" value="Conjugated estrogens"/>
</dbReference>
<dbReference type="DrugBank" id="DB01032">
    <property type="generic name" value="Probenecid"/>
</dbReference>
<dbReference type="DrugBank" id="DB00936">
    <property type="generic name" value="Salicylic acid"/>
</dbReference>
<dbReference type="TCDB" id="2.A.1.19.27">
    <property type="family name" value="the major facilitator superfamily (mfs)"/>
</dbReference>
<dbReference type="GlyCosmos" id="Q63ZE4">
    <property type="glycosylation" value="2 sites, No reported glycans"/>
</dbReference>
<dbReference type="GlyGen" id="Q63ZE4">
    <property type="glycosylation" value="2 sites"/>
</dbReference>
<dbReference type="iPTMnet" id="Q63ZE4"/>
<dbReference type="PhosphoSitePlus" id="Q63ZE4"/>
<dbReference type="BioMuta" id="SLC22A10"/>
<dbReference type="DMDM" id="313104183"/>
<dbReference type="MassIVE" id="Q63ZE4"/>
<dbReference type="PaxDb" id="9606-ENSP00000327569"/>
<dbReference type="PeptideAtlas" id="Q63ZE4"/>
<dbReference type="ProteomicsDB" id="65900">
    <molecule id="Q63ZE4-1"/>
</dbReference>
<dbReference type="ProteomicsDB" id="66001"/>
<dbReference type="Antibodypedia" id="43868">
    <property type="antibodies" value="26 antibodies from 12 providers"/>
</dbReference>
<dbReference type="DNASU" id="387775"/>
<dbReference type="Ensembl" id="ENST00000332793.11">
    <molecule id="Q63ZE4-1"/>
    <property type="protein sequence ID" value="ENSP00000327569.6"/>
    <property type="gene ID" value="ENSG00000184999.13"/>
</dbReference>
<dbReference type="GeneID" id="387775"/>
<dbReference type="KEGG" id="hsa:387775"/>
<dbReference type="MANE-Select" id="ENST00000332793.11">
    <property type="protein sequence ID" value="ENSP00000327569.6"/>
    <property type="RefSeq nucleotide sequence ID" value="NM_001039752.4"/>
    <property type="RefSeq protein sequence ID" value="NP_001034841.3"/>
</dbReference>
<dbReference type="UCSC" id="uc009yor.4">
    <molecule id="Q63ZE4-1"/>
    <property type="organism name" value="human"/>
</dbReference>
<dbReference type="AGR" id="HGNC:18057"/>
<dbReference type="CTD" id="387775"/>
<dbReference type="DisGeNET" id="387775"/>
<dbReference type="GeneCards" id="SLC22A10"/>
<dbReference type="HGNC" id="HGNC:18057">
    <property type="gene designation" value="SLC22A10"/>
</dbReference>
<dbReference type="HPA" id="ENSG00000184999">
    <property type="expression patterns" value="Tissue enriched (liver)"/>
</dbReference>
<dbReference type="MIM" id="607580">
    <property type="type" value="gene"/>
</dbReference>
<dbReference type="neXtProt" id="NX_Q63ZE4"/>
<dbReference type="OpenTargets" id="ENSG00000184999"/>
<dbReference type="PharmGKB" id="PA38283"/>
<dbReference type="VEuPathDB" id="HostDB:ENSG00000184999"/>
<dbReference type="eggNOG" id="KOG0255">
    <property type="taxonomic scope" value="Eukaryota"/>
</dbReference>
<dbReference type="GeneTree" id="ENSGT00940000163667"/>
<dbReference type="HOGENOM" id="CLU_001265_33_3_1"/>
<dbReference type="InParanoid" id="Q63ZE4"/>
<dbReference type="OMA" id="HFIELIP"/>
<dbReference type="OrthoDB" id="2544694at2759"/>
<dbReference type="PAN-GO" id="Q63ZE4">
    <property type="GO annotations" value="1 GO annotation based on evolutionary models"/>
</dbReference>
<dbReference type="PhylomeDB" id="Q63ZE4"/>
<dbReference type="TreeFam" id="TF315847"/>
<dbReference type="PathwayCommons" id="Q63ZE4"/>
<dbReference type="SIGNOR" id="Q63ZE4"/>
<dbReference type="BioGRID-ORCS" id="387775">
    <property type="hits" value="16 hits in 1151 CRISPR screens"/>
</dbReference>
<dbReference type="ChiTaRS" id="SLC22A10">
    <property type="organism name" value="human"/>
</dbReference>
<dbReference type="GeneWiki" id="SLC22A10"/>
<dbReference type="GenomeRNAi" id="387775"/>
<dbReference type="Pharos" id="Q63ZE4">
    <property type="development level" value="Tdark"/>
</dbReference>
<dbReference type="PRO" id="PR:Q63ZE4"/>
<dbReference type="Proteomes" id="UP000005640">
    <property type="component" value="Chromosome 11"/>
</dbReference>
<dbReference type="RNAct" id="Q63ZE4">
    <property type="molecule type" value="protein"/>
</dbReference>
<dbReference type="Bgee" id="ENSG00000184999">
    <property type="expression patterns" value="Expressed in liver and 52 other cell types or tissues"/>
</dbReference>
<dbReference type="ExpressionAtlas" id="Q63ZE4">
    <property type="expression patterns" value="baseline and differential"/>
</dbReference>
<dbReference type="GO" id="GO:0016020">
    <property type="term" value="C:membrane"/>
    <property type="evidence" value="ECO:0007669"/>
    <property type="project" value="UniProtKB-SubCell"/>
</dbReference>
<dbReference type="GO" id="GO:0022857">
    <property type="term" value="F:transmembrane transporter activity"/>
    <property type="evidence" value="ECO:0007669"/>
    <property type="project" value="InterPro"/>
</dbReference>
<dbReference type="GO" id="GO:0015711">
    <property type="term" value="P:organic anion transport"/>
    <property type="evidence" value="ECO:0000318"/>
    <property type="project" value="GO_Central"/>
</dbReference>
<dbReference type="CDD" id="cd17374">
    <property type="entry name" value="MFS_OAT"/>
    <property type="match status" value="1"/>
</dbReference>
<dbReference type="FunFam" id="1.20.1250.20:FF:000023">
    <property type="entry name" value="Solute carrier family 22 member 6"/>
    <property type="match status" value="1"/>
</dbReference>
<dbReference type="Gene3D" id="1.20.1250.20">
    <property type="entry name" value="MFS general substrate transporter like domains"/>
    <property type="match status" value="1"/>
</dbReference>
<dbReference type="InterPro" id="IPR020846">
    <property type="entry name" value="MFS_dom"/>
</dbReference>
<dbReference type="InterPro" id="IPR005828">
    <property type="entry name" value="MFS_sugar_transport-like"/>
</dbReference>
<dbReference type="InterPro" id="IPR036259">
    <property type="entry name" value="MFS_trans_sf"/>
</dbReference>
<dbReference type="PANTHER" id="PTHR24064">
    <property type="entry name" value="SOLUTE CARRIER FAMILY 22 MEMBER"/>
    <property type="match status" value="1"/>
</dbReference>
<dbReference type="Pfam" id="PF00083">
    <property type="entry name" value="Sugar_tr"/>
    <property type="match status" value="1"/>
</dbReference>
<dbReference type="SUPFAM" id="SSF103473">
    <property type="entry name" value="MFS general substrate transporter"/>
    <property type="match status" value="1"/>
</dbReference>
<dbReference type="PROSITE" id="PS50850">
    <property type="entry name" value="MFS"/>
    <property type="match status" value="1"/>
</dbReference>
<accession>Q63ZE4</accession>
<accession>Q68CJ0</accession>
<protein>
    <recommendedName>
        <fullName>Solute carrier family 22 member 10</fullName>
    </recommendedName>
    <alternativeName>
        <fullName>Organic anion transporter 5</fullName>
    </alternativeName>
</protein>
<organism>
    <name type="scientific">Homo sapiens</name>
    <name type="common">Human</name>
    <dbReference type="NCBI Taxonomy" id="9606"/>
    <lineage>
        <taxon>Eukaryota</taxon>
        <taxon>Metazoa</taxon>
        <taxon>Chordata</taxon>
        <taxon>Craniata</taxon>
        <taxon>Vertebrata</taxon>
        <taxon>Euteleostomi</taxon>
        <taxon>Mammalia</taxon>
        <taxon>Eutheria</taxon>
        <taxon>Euarchontoglires</taxon>
        <taxon>Primates</taxon>
        <taxon>Haplorrhini</taxon>
        <taxon>Catarrhini</taxon>
        <taxon>Hominidae</taxon>
        <taxon>Homo</taxon>
    </lineage>
</organism>
<feature type="chain" id="PRO_0000233716" description="Solute carrier family 22 member 10">
    <location>
        <begin position="1"/>
        <end position="541"/>
    </location>
</feature>
<feature type="topological domain" description="Cytoplasmic" evidence="1">
    <location>
        <begin position="1"/>
        <end position="15"/>
    </location>
</feature>
<feature type="transmembrane region" description="Helical" evidence="1">
    <location>
        <begin position="16"/>
        <end position="36"/>
    </location>
</feature>
<feature type="topological domain" description="Extracellular" evidence="1">
    <location>
        <begin position="37"/>
        <end position="145"/>
    </location>
</feature>
<feature type="transmembrane region" description="Helical" evidence="1">
    <location>
        <begin position="146"/>
        <end position="166"/>
    </location>
</feature>
<feature type="topological domain" description="Cytoplasmic" evidence="1">
    <location>
        <begin position="167"/>
        <end position="193"/>
    </location>
</feature>
<feature type="transmembrane region" description="Helical" evidence="1">
    <location>
        <begin position="194"/>
        <end position="214"/>
    </location>
</feature>
<feature type="topological domain" description="Extracellular" evidence="1">
    <location>
        <begin position="215"/>
        <end position="230"/>
    </location>
</feature>
<feature type="transmembrane region" description="Helical" evidence="1">
    <location>
        <begin position="231"/>
        <end position="251"/>
    </location>
</feature>
<feature type="topological domain" description="Cytoplasmic" evidence="1">
    <location>
        <begin position="252"/>
        <end position="259"/>
    </location>
</feature>
<feature type="transmembrane region" description="Helical" evidence="1">
    <location>
        <begin position="260"/>
        <end position="280"/>
    </location>
</feature>
<feature type="topological domain" description="Extracellular" evidence="1">
    <location>
        <begin position="281"/>
        <end position="349"/>
    </location>
</feature>
<feature type="transmembrane region" description="Helical" evidence="1">
    <location>
        <begin position="350"/>
        <end position="370"/>
    </location>
</feature>
<feature type="topological domain" description="Cytoplasmic" evidence="1">
    <location>
        <begin position="371"/>
        <end position="377"/>
    </location>
</feature>
<feature type="transmembrane region" description="Helical" evidence="1">
    <location>
        <begin position="378"/>
        <end position="398"/>
    </location>
</feature>
<feature type="topological domain" description="Extracellular" evidence="1">
    <location>
        <begin position="399"/>
        <end position="406"/>
    </location>
</feature>
<feature type="transmembrane region" description="Helical" evidence="1">
    <location>
        <begin position="407"/>
        <end position="427"/>
    </location>
</feature>
<feature type="topological domain" description="Cytoplasmic" evidence="1">
    <location>
        <begin position="428"/>
        <end position="436"/>
    </location>
</feature>
<feature type="transmembrane region" description="Helical" evidence="1">
    <location>
        <begin position="437"/>
        <end position="457"/>
    </location>
</feature>
<feature type="topological domain" description="Extracellular" evidence="1">
    <location>
        <begin position="458"/>
        <end position="472"/>
    </location>
</feature>
<feature type="transmembrane region" description="Helical" evidence="1">
    <location>
        <begin position="473"/>
        <end position="493"/>
    </location>
</feature>
<feature type="topological domain" description="Cytoplasmic" evidence="1">
    <location>
        <begin position="494"/>
        <end position="495"/>
    </location>
</feature>
<feature type="transmembrane region" description="Helical" evidence="1">
    <location>
        <begin position="496"/>
        <end position="516"/>
    </location>
</feature>
<feature type="topological domain" description="Extracellular" evidence="1">
    <location>
        <begin position="517"/>
        <end position="541"/>
    </location>
</feature>
<feature type="glycosylation site" description="N-linked (GlcNAc...) asparagine" evidence="1">
    <location>
        <position position="56"/>
    </location>
</feature>
<feature type="glycosylation site" description="N-linked (GlcNAc...) asparagine" evidence="1">
    <location>
        <position position="102"/>
    </location>
</feature>
<feature type="splice variant" id="VSP_056645" description="In isoform 2." evidence="4">
    <location>
        <begin position="1"/>
        <end position="155"/>
    </location>
</feature>
<feature type="splice variant" id="VSP_056646" description="In isoform 2." evidence="4">
    <original>VLYGAVALIVRCLALLTLNHMGRRISQILFMFLVGLSILANT</original>
    <variation>KCRPCVWLWHVWESAVLLLLFPVLLFTSLNSSPLFSGQELQE</variation>
    <location>
        <begin position="383"/>
        <end position="424"/>
    </location>
</feature>
<feature type="splice variant" id="VSP_056647" description="In isoform 2." evidence="4">
    <location>
        <begin position="425"/>
        <end position="541"/>
    </location>
</feature>
<sequence length="541" mass="60257">MAFEELLSQVGGLGRFQMLHLVFILPSLMLLIPHILLENFAAAIPGHRCWVHMLDNNTGSGNETGILSEDALLRISIPLDSNLRPEKCRRFVHPQWQLLHLNGTIHSTSEADTEPCVDGWVYDQSYFPSTIVTKWDLVCDYQSLKSVVQFLLLTGMLVGGIIGGHVSDRFGRRFILRWCLLQLAITDTCAAFAPTFPVYCVLRFLAGFSSMIIISNNSLPITEWIRPNSKALVVILSSGALSIGQIILGGLAYVFRDWQTLHVVASVPFFVFFLLSRWLVESARWLIITNKLDEGLKALRKVARTNGIKNAEETLNIEVVRSTMQEELDAAQTKTTVCDLFRNPSMRKRICILVFLRFANTIPFYGTMVNLQHVGSNIFLLQVLYGAVALIVRCLALLTLNHMGRRISQILFMFLVGLSILANTFVPKEMQTLRVALACLGIGCSAATFSSVAVHFIELIPTVLRARASGIDLTASRIGAALAPLLMTLTVFFTTLPWIIYGIFPIIGGLIVFLLPETKNLPLPDTIKDVENQKKNLKEKA</sequence>
<proteinExistence type="evidence at protein level"/>
<comment type="subcellular location">
    <subcellularLocation>
        <location evidence="5">Membrane</location>
        <topology evidence="5">Multi-pass membrane protein</topology>
    </subcellularLocation>
</comment>
<comment type="alternative products">
    <event type="alternative splicing"/>
    <isoform>
        <id>Q63ZE4-1</id>
        <name>1</name>
        <sequence type="displayed"/>
    </isoform>
    <isoform>
        <id>Q63ZE4-2</id>
        <name>2</name>
        <sequence type="described" ref="VSP_056645 VSP_056646 VSP_056647"/>
    </isoform>
</comment>
<comment type="tissue specificity">
    <text evidence="2 3">Detected in fetal and adult liver, and in adult kidney.</text>
</comment>
<comment type="similarity">
    <text evidence="5">Belongs to the major facilitator (TC 2.A.1) superfamily. Organic cation transporter (TC 2.A.1.19) family.</text>
</comment>